<gene>
    <name evidence="1" type="primary">lgt</name>
    <name type="ordered locus">VV0678</name>
</gene>
<feature type="chain" id="PRO_0000172713" description="Phosphatidylglycerol--prolipoprotein diacylglyceryl transferase">
    <location>
        <begin position="1"/>
        <end position="271"/>
    </location>
</feature>
<feature type="transmembrane region" description="Helical" evidence="1">
    <location>
        <begin position="21"/>
        <end position="41"/>
    </location>
</feature>
<feature type="transmembrane region" description="Helical" evidence="1">
    <location>
        <begin position="60"/>
        <end position="80"/>
    </location>
</feature>
<feature type="transmembrane region" description="Helical" evidence="1">
    <location>
        <begin position="95"/>
        <end position="115"/>
    </location>
</feature>
<feature type="transmembrane region" description="Helical" evidence="1">
    <location>
        <begin position="124"/>
        <end position="144"/>
    </location>
</feature>
<feature type="transmembrane region" description="Helical" evidence="1">
    <location>
        <begin position="176"/>
        <end position="196"/>
    </location>
</feature>
<feature type="transmembrane region" description="Helical" evidence="1">
    <location>
        <begin position="203"/>
        <end position="223"/>
    </location>
</feature>
<feature type="transmembrane region" description="Helical" evidence="1">
    <location>
        <begin position="230"/>
        <end position="250"/>
    </location>
</feature>
<feature type="binding site" evidence="1">
    <location>
        <position position="143"/>
    </location>
    <ligand>
        <name>a 1,2-diacyl-sn-glycero-3-phospho-(1'-sn-glycerol)</name>
        <dbReference type="ChEBI" id="CHEBI:64716"/>
    </ligand>
</feature>
<keyword id="KW-0997">Cell inner membrane</keyword>
<keyword id="KW-1003">Cell membrane</keyword>
<keyword id="KW-0472">Membrane</keyword>
<keyword id="KW-0808">Transferase</keyword>
<keyword id="KW-0812">Transmembrane</keyword>
<keyword id="KW-1133">Transmembrane helix</keyword>
<accession>Q7MNN7</accession>
<sequence>MSQGYLPFPNIDPVFFSIGPISVRWYGLMYLFGFLFAMWLANRRADKPGSGWTREQVSDLLFAGFLGVVLGGRIGYVLFYNFDLFLADPIYLFKVWTGGMSFHGGLLGVITAMLWYAKKNGRTFFGVADFVAPLVPFGLGVGRLGNFMNGELWGRVTDVPWAMVFPTGGPLPRHPSQLYEMALEGVLLFFILNWFIRKPRPLGSVSGLFLAGYGTFRFLVEYVREPDAQLGLFGGFISMGQILSSPMIIGGLALMAWAYKRGHYQDKVTVK</sequence>
<evidence type="ECO:0000255" key="1">
    <source>
        <dbReference type="HAMAP-Rule" id="MF_01147"/>
    </source>
</evidence>
<name>LGT_VIBVY</name>
<comment type="function">
    <text evidence="1">Catalyzes the transfer of the diacylglyceryl group from phosphatidylglycerol to the sulfhydryl group of the N-terminal cysteine of a prolipoprotein, the first step in the formation of mature lipoproteins.</text>
</comment>
<comment type="catalytic activity">
    <reaction evidence="1">
        <text>L-cysteinyl-[prolipoprotein] + a 1,2-diacyl-sn-glycero-3-phospho-(1'-sn-glycerol) = an S-1,2-diacyl-sn-glyceryl-L-cysteinyl-[prolipoprotein] + sn-glycerol 1-phosphate + H(+)</text>
        <dbReference type="Rhea" id="RHEA:56712"/>
        <dbReference type="Rhea" id="RHEA-COMP:14679"/>
        <dbReference type="Rhea" id="RHEA-COMP:14680"/>
        <dbReference type="ChEBI" id="CHEBI:15378"/>
        <dbReference type="ChEBI" id="CHEBI:29950"/>
        <dbReference type="ChEBI" id="CHEBI:57685"/>
        <dbReference type="ChEBI" id="CHEBI:64716"/>
        <dbReference type="ChEBI" id="CHEBI:140658"/>
        <dbReference type="EC" id="2.5.1.145"/>
    </reaction>
</comment>
<comment type="pathway">
    <text evidence="1">Protein modification; lipoprotein biosynthesis (diacylglyceryl transfer).</text>
</comment>
<comment type="subcellular location">
    <subcellularLocation>
        <location evidence="1">Cell inner membrane</location>
        <topology evidence="1">Multi-pass membrane protein</topology>
    </subcellularLocation>
</comment>
<comment type="similarity">
    <text evidence="1">Belongs to the Lgt family.</text>
</comment>
<organism>
    <name type="scientific">Vibrio vulnificus (strain YJ016)</name>
    <dbReference type="NCBI Taxonomy" id="196600"/>
    <lineage>
        <taxon>Bacteria</taxon>
        <taxon>Pseudomonadati</taxon>
        <taxon>Pseudomonadota</taxon>
        <taxon>Gammaproteobacteria</taxon>
        <taxon>Vibrionales</taxon>
        <taxon>Vibrionaceae</taxon>
        <taxon>Vibrio</taxon>
    </lineage>
</organism>
<proteinExistence type="inferred from homology"/>
<reference key="1">
    <citation type="journal article" date="2003" name="Genome Res.">
        <title>Comparative genome analysis of Vibrio vulnificus, a marine pathogen.</title>
        <authorList>
            <person name="Chen C.-Y."/>
            <person name="Wu K.-M."/>
            <person name="Chang Y.-C."/>
            <person name="Chang C.-H."/>
            <person name="Tsai H.-C."/>
            <person name="Liao T.-L."/>
            <person name="Liu Y.-M."/>
            <person name="Chen H.-J."/>
            <person name="Shen A.B.-T."/>
            <person name="Li J.-C."/>
            <person name="Su T.-L."/>
            <person name="Shao C.-P."/>
            <person name="Lee C.-T."/>
            <person name="Hor L.-I."/>
            <person name="Tsai S.-F."/>
        </authorList>
    </citation>
    <scope>NUCLEOTIDE SEQUENCE [LARGE SCALE GENOMIC DNA]</scope>
    <source>
        <strain>YJ016</strain>
    </source>
</reference>
<protein>
    <recommendedName>
        <fullName evidence="1">Phosphatidylglycerol--prolipoprotein diacylglyceryl transferase</fullName>
        <ecNumber evidence="1">2.5.1.145</ecNumber>
    </recommendedName>
</protein>
<dbReference type="EC" id="2.5.1.145" evidence="1"/>
<dbReference type="EMBL" id="BA000037">
    <property type="protein sequence ID" value="BAC93442.1"/>
    <property type="molecule type" value="Genomic_DNA"/>
</dbReference>
<dbReference type="RefSeq" id="WP_011149546.1">
    <property type="nucleotide sequence ID" value="NC_005139.1"/>
</dbReference>
<dbReference type="SMR" id="Q7MNN7"/>
<dbReference type="STRING" id="672.VV93_v1c06180"/>
<dbReference type="KEGG" id="vvy:VV0678"/>
<dbReference type="PATRIC" id="fig|196600.6.peg.698"/>
<dbReference type="eggNOG" id="COG0682">
    <property type="taxonomic scope" value="Bacteria"/>
</dbReference>
<dbReference type="HOGENOM" id="CLU_013386_1_0_6"/>
<dbReference type="UniPathway" id="UPA00664"/>
<dbReference type="Proteomes" id="UP000002675">
    <property type="component" value="Chromosome I"/>
</dbReference>
<dbReference type="GO" id="GO:0005886">
    <property type="term" value="C:plasma membrane"/>
    <property type="evidence" value="ECO:0007669"/>
    <property type="project" value="UniProtKB-SubCell"/>
</dbReference>
<dbReference type="GO" id="GO:0008961">
    <property type="term" value="F:phosphatidylglycerol-prolipoprotein diacylglyceryl transferase activity"/>
    <property type="evidence" value="ECO:0007669"/>
    <property type="project" value="UniProtKB-UniRule"/>
</dbReference>
<dbReference type="GO" id="GO:0042158">
    <property type="term" value="P:lipoprotein biosynthetic process"/>
    <property type="evidence" value="ECO:0007669"/>
    <property type="project" value="UniProtKB-UniRule"/>
</dbReference>
<dbReference type="HAMAP" id="MF_01147">
    <property type="entry name" value="Lgt"/>
    <property type="match status" value="1"/>
</dbReference>
<dbReference type="InterPro" id="IPR001640">
    <property type="entry name" value="Lgt"/>
</dbReference>
<dbReference type="NCBIfam" id="TIGR00544">
    <property type="entry name" value="lgt"/>
    <property type="match status" value="1"/>
</dbReference>
<dbReference type="PANTHER" id="PTHR30589:SF0">
    <property type="entry name" value="PHOSPHATIDYLGLYCEROL--PROLIPOPROTEIN DIACYLGLYCERYL TRANSFERASE"/>
    <property type="match status" value="1"/>
</dbReference>
<dbReference type="PANTHER" id="PTHR30589">
    <property type="entry name" value="PROLIPOPROTEIN DIACYLGLYCERYL TRANSFERASE"/>
    <property type="match status" value="1"/>
</dbReference>
<dbReference type="Pfam" id="PF01790">
    <property type="entry name" value="LGT"/>
    <property type="match status" value="1"/>
</dbReference>
<dbReference type="PROSITE" id="PS01311">
    <property type="entry name" value="LGT"/>
    <property type="match status" value="1"/>
</dbReference>